<comment type="function">
    <text evidence="1">Acts as an adapter for the xpo1-mediated export of the 60S ribosomal subunit.</text>
</comment>
<comment type="subunit">
    <text evidence="1">Associates with the 60S ribosomal subunit.</text>
</comment>
<comment type="subcellular location">
    <subcellularLocation>
        <location evidence="1">Cytoplasm</location>
    </subcellularLocation>
    <subcellularLocation>
        <location evidence="1">Nucleus</location>
        <location evidence="1">Nucleoplasm</location>
    </subcellularLocation>
    <text evidence="1">Shuttles between the nucleus and the cytoplasm in a xpo1-dependent manner.</text>
</comment>
<comment type="similarity">
    <text evidence="3">Belongs to the NMD3 family.</text>
</comment>
<proteinExistence type="inferred from homology"/>
<protein>
    <recommendedName>
        <fullName>60S ribosomal export protein NMD3</fullName>
    </recommendedName>
</protein>
<feature type="chain" id="PRO_0000323567" description="60S ribosomal export protein NMD3">
    <location>
        <begin position="1"/>
        <end position="530"/>
    </location>
</feature>
<feature type="region of interest" description="Disordered" evidence="2">
    <location>
        <begin position="497"/>
        <end position="530"/>
    </location>
</feature>
<feature type="compositionally biased region" description="Acidic residues" evidence="2">
    <location>
        <begin position="500"/>
        <end position="530"/>
    </location>
</feature>
<organism>
    <name type="scientific">Dictyostelium discoideum</name>
    <name type="common">Social amoeba</name>
    <dbReference type="NCBI Taxonomy" id="44689"/>
    <lineage>
        <taxon>Eukaryota</taxon>
        <taxon>Amoebozoa</taxon>
        <taxon>Evosea</taxon>
        <taxon>Eumycetozoa</taxon>
        <taxon>Dictyostelia</taxon>
        <taxon>Dictyosteliales</taxon>
        <taxon>Dictyosteliaceae</taxon>
        <taxon>Dictyostelium</taxon>
    </lineage>
</organism>
<dbReference type="EMBL" id="AAFI02000006">
    <property type="protein sequence ID" value="EAL71783.1"/>
    <property type="molecule type" value="Genomic_DNA"/>
</dbReference>
<dbReference type="RefSeq" id="XP_645660.1">
    <property type="nucleotide sequence ID" value="XM_640568.1"/>
</dbReference>
<dbReference type="SMR" id="Q55BF2"/>
<dbReference type="FunCoup" id="Q55BF2">
    <property type="interactions" value="1337"/>
</dbReference>
<dbReference type="STRING" id="44689.Q55BF2"/>
<dbReference type="PaxDb" id="44689-DDB0302495"/>
<dbReference type="EnsemblProtists" id="EAL71783">
    <property type="protein sequence ID" value="EAL71783"/>
    <property type="gene ID" value="DDB_G0271306"/>
</dbReference>
<dbReference type="GeneID" id="8617852"/>
<dbReference type="KEGG" id="ddi:DDB_G0271306"/>
<dbReference type="dictyBase" id="DDB_G0271306">
    <property type="gene designation" value="nmd3"/>
</dbReference>
<dbReference type="VEuPathDB" id="AmoebaDB:DDB_G0271306"/>
<dbReference type="eggNOG" id="KOG2613">
    <property type="taxonomic scope" value="Eukaryota"/>
</dbReference>
<dbReference type="HOGENOM" id="CLU_027444_2_0_1"/>
<dbReference type="InParanoid" id="Q55BF2"/>
<dbReference type="OMA" id="VILVRKH"/>
<dbReference type="PhylomeDB" id="Q55BF2"/>
<dbReference type="PRO" id="PR:Q55BF2"/>
<dbReference type="Proteomes" id="UP000002195">
    <property type="component" value="Chromosome 2"/>
</dbReference>
<dbReference type="GO" id="GO:0005737">
    <property type="term" value="C:cytoplasm"/>
    <property type="evidence" value="ECO:0000318"/>
    <property type="project" value="GO_Central"/>
</dbReference>
<dbReference type="GO" id="GO:0005829">
    <property type="term" value="C:cytosol"/>
    <property type="evidence" value="ECO:0000250"/>
    <property type="project" value="dictyBase"/>
</dbReference>
<dbReference type="GO" id="GO:0005654">
    <property type="term" value="C:nucleoplasm"/>
    <property type="evidence" value="ECO:0007669"/>
    <property type="project" value="UniProtKB-SubCell"/>
</dbReference>
<dbReference type="GO" id="GO:0005634">
    <property type="term" value="C:nucleus"/>
    <property type="evidence" value="ECO:0000250"/>
    <property type="project" value="dictyBase"/>
</dbReference>
<dbReference type="GO" id="GO:0043023">
    <property type="term" value="F:ribosomal large subunit binding"/>
    <property type="evidence" value="ECO:0000250"/>
    <property type="project" value="dictyBase"/>
</dbReference>
<dbReference type="GO" id="GO:0015031">
    <property type="term" value="P:protein transport"/>
    <property type="evidence" value="ECO:0007669"/>
    <property type="project" value="UniProtKB-KW"/>
</dbReference>
<dbReference type="GO" id="GO:0000055">
    <property type="term" value="P:ribosomal large subunit export from nucleus"/>
    <property type="evidence" value="ECO:0000250"/>
    <property type="project" value="dictyBase"/>
</dbReference>
<dbReference type="InterPro" id="IPR039768">
    <property type="entry name" value="Nmd3"/>
</dbReference>
<dbReference type="InterPro" id="IPR007064">
    <property type="entry name" value="Nmd3_N"/>
</dbReference>
<dbReference type="InterPro" id="IPR048898">
    <property type="entry name" value="NMD3_OB"/>
</dbReference>
<dbReference type="InterPro" id="IPR048899">
    <property type="entry name" value="NMD_SH3"/>
</dbReference>
<dbReference type="PANTHER" id="PTHR12746:SF2">
    <property type="entry name" value="60S RIBOSOMAL EXPORT PROTEIN NMD3"/>
    <property type="match status" value="1"/>
</dbReference>
<dbReference type="PANTHER" id="PTHR12746">
    <property type="entry name" value="NONSENSE-MEDIATED MRNA DECAY PROTEIN 3"/>
    <property type="match status" value="1"/>
</dbReference>
<dbReference type="Pfam" id="PF04981">
    <property type="entry name" value="NMD3"/>
    <property type="match status" value="1"/>
</dbReference>
<dbReference type="Pfam" id="PF21192">
    <property type="entry name" value="NMD3_OB"/>
    <property type="match status" value="1"/>
</dbReference>
<dbReference type="Pfam" id="PF21193">
    <property type="entry name" value="NMD_SH3"/>
    <property type="match status" value="1"/>
</dbReference>
<accession>Q55BF2</accession>
<gene>
    <name type="primary">nmd3</name>
    <name type="ORF">DDB_G0271306</name>
</gene>
<sequence length="530" mass="61005">MEYIPQVKQANILCCMCGVLIPANPSNMCVDCIKSQVDITEGIPKQLTIQWCRGCARYLQPPNHWAIAELESRELLTICIKRIKGLNKVKLVDAGWVWTEPHSKRLKVKLTIQKEVFTSAILQQIFIIEFIVQGQQCDKCQKFEAKDTWNSVVQLRQKVDHKRTFLYIEQLILKHNAHSQTLNIKEKPDGLDFFFSNRNHAMKFVEFISAITPVKTKKSEQLISSDEQNNAANYKYTFSVEIVPLSKDDIVCLPPKIAHQLGNMGPLVVVTKVSNLIHFIDPNTLHTGEISALTFWNSPFRALSSYKQLVEFTVLDVNLTGATRGRYALSDIQLMRSADFGANDNIYDIRSHLGNILNPGDLALGYDVASSNFPDSDLAGMKKNQQLPDFVLVKKTYPSKNDFRFKRHWYFKEIPKEGIENPKKFEIDQMERDREEFLREIEADPELRSKINIYKEADAANILQQRIKKMQEHGIDEDAIKEELALDGLLDDMVNNLTINDEEFEDEEDQEGEDDDEEYDDEDEDDDMME</sequence>
<reference key="1">
    <citation type="journal article" date="2002" name="Nature">
        <title>Sequence and analysis of chromosome 2 of Dictyostelium discoideum.</title>
        <authorList>
            <person name="Gloeckner G."/>
            <person name="Eichinger L."/>
            <person name="Szafranski K."/>
            <person name="Pachebat J.A."/>
            <person name="Bankier A.T."/>
            <person name="Dear P.H."/>
            <person name="Lehmann R."/>
            <person name="Baumgart C."/>
            <person name="Parra G."/>
            <person name="Abril J.F."/>
            <person name="Guigo R."/>
            <person name="Kumpf K."/>
            <person name="Tunggal B."/>
            <person name="Cox E.C."/>
            <person name="Quail M.A."/>
            <person name="Platzer M."/>
            <person name="Rosenthal A."/>
            <person name="Noegel A.A."/>
        </authorList>
    </citation>
    <scope>NUCLEOTIDE SEQUENCE [LARGE SCALE GENOMIC DNA]</scope>
    <source>
        <strain>AX4</strain>
    </source>
</reference>
<reference key="2">
    <citation type="journal article" date="2005" name="Nature">
        <title>The genome of the social amoeba Dictyostelium discoideum.</title>
        <authorList>
            <person name="Eichinger L."/>
            <person name="Pachebat J.A."/>
            <person name="Gloeckner G."/>
            <person name="Rajandream M.A."/>
            <person name="Sucgang R."/>
            <person name="Berriman M."/>
            <person name="Song J."/>
            <person name="Olsen R."/>
            <person name="Szafranski K."/>
            <person name="Xu Q."/>
            <person name="Tunggal B."/>
            <person name="Kummerfeld S."/>
            <person name="Madera M."/>
            <person name="Konfortov B.A."/>
            <person name="Rivero F."/>
            <person name="Bankier A.T."/>
            <person name="Lehmann R."/>
            <person name="Hamlin N."/>
            <person name="Davies R."/>
            <person name="Gaudet P."/>
            <person name="Fey P."/>
            <person name="Pilcher K."/>
            <person name="Chen G."/>
            <person name="Saunders D."/>
            <person name="Sodergren E.J."/>
            <person name="Davis P."/>
            <person name="Kerhornou A."/>
            <person name="Nie X."/>
            <person name="Hall N."/>
            <person name="Anjard C."/>
            <person name="Hemphill L."/>
            <person name="Bason N."/>
            <person name="Farbrother P."/>
            <person name="Desany B."/>
            <person name="Just E."/>
            <person name="Morio T."/>
            <person name="Rost R."/>
            <person name="Churcher C.M."/>
            <person name="Cooper J."/>
            <person name="Haydock S."/>
            <person name="van Driessche N."/>
            <person name="Cronin A."/>
            <person name="Goodhead I."/>
            <person name="Muzny D.M."/>
            <person name="Mourier T."/>
            <person name="Pain A."/>
            <person name="Lu M."/>
            <person name="Harper D."/>
            <person name="Lindsay R."/>
            <person name="Hauser H."/>
            <person name="James K.D."/>
            <person name="Quiles M."/>
            <person name="Madan Babu M."/>
            <person name="Saito T."/>
            <person name="Buchrieser C."/>
            <person name="Wardroper A."/>
            <person name="Felder M."/>
            <person name="Thangavelu M."/>
            <person name="Johnson D."/>
            <person name="Knights A."/>
            <person name="Loulseged H."/>
            <person name="Mungall K.L."/>
            <person name="Oliver K."/>
            <person name="Price C."/>
            <person name="Quail M.A."/>
            <person name="Urushihara H."/>
            <person name="Hernandez J."/>
            <person name="Rabbinowitsch E."/>
            <person name="Steffen D."/>
            <person name="Sanders M."/>
            <person name="Ma J."/>
            <person name="Kohara Y."/>
            <person name="Sharp S."/>
            <person name="Simmonds M.N."/>
            <person name="Spiegler S."/>
            <person name="Tivey A."/>
            <person name="Sugano S."/>
            <person name="White B."/>
            <person name="Walker D."/>
            <person name="Woodward J.R."/>
            <person name="Winckler T."/>
            <person name="Tanaka Y."/>
            <person name="Shaulsky G."/>
            <person name="Schleicher M."/>
            <person name="Weinstock G.M."/>
            <person name="Rosenthal A."/>
            <person name="Cox E.C."/>
            <person name="Chisholm R.L."/>
            <person name="Gibbs R.A."/>
            <person name="Loomis W.F."/>
            <person name="Platzer M."/>
            <person name="Kay R.R."/>
            <person name="Williams J.G."/>
            <person name="Dear P.H."/>
            <person name="Noegel A.A."/>
            <person name="Barrell B.G."/>
            <person name="Kuspa A."/>
        </authorList>
    </citation>
    <scope>NUCLEOTIDE SEQUENCE [LARGE SCALE GENOMIC DNA]</scope>
    <source>
        <strain>AX4</strain>
    </source>
</reference>
<name>NMD3_DICDI</name>
<evidence type="ECO:0000250" key="1"/>
<evidence type="ECO:0000256" key="2">
    <source>
        <dbReference type="SAM" id="MobiDB-lite"/>
    </source>
</evidence>
<evidence type="ECO:0000305" key="3"/>
<keyword id="KW-0963">Cytoplasm</keyword>
<keyword id="KW-0539">Nucleus</keyword>
<keyword id="KW-0653">Protein transport</keyword>
<keyword id="KW-1185">Reference proteome</keyword>
<keyword id="KW-0813">Transport</keyword>